<name>CAIA_SALPB</name>
<keyword id="KW-0963">Cytoplasm</keyword>
<keyword id="KW-0274">FAD</keyword>
<keyword id="KW-0285">Flavoprotein</keyword>
<keyword id="KW-0560">Oxidoreductase</keyword>
<accession>A9MYJ9</accession>
<organism>
    <name type="scientific">Salmonella paratyphi B (strain ATCC BAA-1250 / SPB7)</name>
    <dbReference type="NCBI Taxonomy" id="1016998"/>
    <lineage>
        <taxon>Bacteria</taxon>
        <taxon>Pseudomonadati</taxon>
        <taxon>Pseudomonadota</taxon>
        <taxon>Gammaproteobacteria</taxon>
        <taxon>Enterobacterales</taxon>
        <taxon>Enterobacteriaceae</taxon>
        <taxon>Salmonella</taxon>
    </lineage>
</organism>
<sequence length="380" mass="42481">MDFNLNDEQELFVAGIRELMASENWEAYFAECDRDSVYPERFVKALADMGIDSLLIPEEHGGLEAGFVTVAAVWMELGRLGAPTYVLYQLPGGFNTFLREGTQEQIDKIMAFRGTGKQMWNSAITEPGAGSDVGSLKTTYTRKNGKVYLNGSKCFITSSAYTPYIVVMARDGASPDKPVYTEWFVDMSKAGIKVNKLEKLGLRMDSCCEITFDDVELDEKDMFGREGNGFNRVKEEFDHERFLVALTNYGTAMCAFEDAARYANQRVQFGEAIGRFQLIQEKFAHMAIKLNSMKNMLLEAAWKADNGTITSGDAAMCKYFCANAAFEVVDTAMQVLGGVGIAGNHRITRFWRDLRVDRVSGGSDEMQILTLGRAVLKQYR</sequence>
<protein>
    <recommendedName>
        <fullName evidence="1">Crotonobetainyl-CoA reductase</fullName>
        <ecNumber evidence="1">1.3.8.13</ecNumber>
    </recommendedName>
    <alternativeName>
        <fullName evidence="1">Crotonobetainyl-CoA dehydrogenase</fullName>
    </alternativeName>
</protein>
<reference key="1">
    <citation type="submission" date="2007-11" db="EMBL/GenBank/DDBJ databases">
        <authorList>
            <consortium name="The Salmonella enterica serovar Paratyphi B Genome Sequencing Project"/>
            <person name="McClelland M."/>
            <person name="Sanderson E.K."/>
            <person name="Porwollik S."/>
            <person name="Spieth J."/>
            <person name="Clifton W.S."/>
            <person name="Fulton R."/>
            <person name="Cordes M."/>
            <person name="Wollam A."/>
            <person name="Shah N."/>
            <person name="Pepin K."/>
            <person name="Bhonagiri V."/>
            <person name="Nash W."/>
            <person name="Johnson M."/>
            <person name="Thiruvilangam P."/>
            <person name="Wilson R."/>
        </authorList>
    </citation>
    <scope>NUCLEOTIDE SEQUENCE [LARGE SCALE GENOMIC DNA]</scope>
    <source>
        <strain>ATCC BAA-1250 / SPB7</strain>
    </source>
</reference>
<gene>
    <name evidence="1" type="primary">caiA</name>
    <name type="ordered locus">SPAB_00090</name>
</gene>
<proteinExistence type="inferred from homology"/>
<feature type="chain" id="PRO_1000084430" description="Crotonobetainyl-CoA reductase">
    <location>
        <begin position="1"/>
        <end position="380"/>
    </location>
</feature>
<comment type="function">
    <text evidence="1">Catalyzes the reduction of crotonobetainyl-CoA to gamma-butyrobetainyl-CoA.</text>
</comment>
<comment type="catalytic activity">
    <reaction evidence="1">
        <text>4-(trimethylamino)butanoyl-CoA + oxidized [electron-transfer flavoprotein] + H(+) = crotonobetainyl-CoA + reduced [electron-transfer flavoprotein]</text>
        <dbReference type="Rhea" id="RHEA:51584"/>
        <dbReference type="Rhea" id="RHEA-COMP:10685"/>
        <dbReference type="Rhea" id="RHEA-COMP:10686"/>
        <dbReference type="ChEBI" id="CHEBI:15378"/>
        <dbReference type="ChEBI" id="CHEBI:57692"/>
        <dbReference type="ChEBI" id="CHEBI:58307"/>
        <dbReference type="ChEBI" id="CHEBI:60933"/>
        <dbReference type="ChEBI" id="CHEBI:61513"/>
        <dbReference type="EC" id="1.3.8.13"/>
    </reaction>
</comment>
<comment type="cofactor">
    <cofactor evidence="1">
        <name>FAD</name>
        <dbReference type="ChEBI" id="CHEBI:57692"/>
    </cofactor>
</comment>
<comment type="pathway">
    <text evidence="1">Amine and polyamine metabolism; carnitine metabolism.</text>
</comment>
<comment type="subunit">
    <text evidence="1">Homotetramer.</text>
</comment>
<comment type="subcellular location">
    <subcellularLocation>
        <location evidence="1">Cytoplasm</location>
    </subcellularLocation>
</comment>
<comment type="similarity">
    <text evidence="1">Belongs to the acyl-CoA dehydrogenase family.</text>
</comment>
<evidence type="ECO:0000255" key="1">
    <source>
        <dbReference type="HAMAP-Rule" id="MF_01052"/>
    </source>
</evidence>
<dbReference type="EC" id="1.3.8.13" evidence="1"/>
<dbReference type="EMBL" id="CP000886">
    <property type="protein sequence ID" value="ABX65533.1"/>
    <property type="molecule type" value="Genomic_DNA"/>
</dbReference>
<dbReference type="RefSeq" id="WP_000347134.1">
    <property type="nucleotide sequence ID" value="NC_010102.1"/>
</dbReference>
<dbReference type="SMR" id="A9MYJ9"/>
<dbReference type="GeneID" id="44979088"/>
<dbReference type="KEGG" id="spq:SPAB_00090"/>
<dbReference type="PATRIC" id="fig|1016998.12.peg.86"/>
<dbReference type="HOGENOM" id="CLU_018204_0_2_6"/>
<dbReference type="BioCyc" id="SENT1016998:SPAB_RS00360-MONOMER"/>
<dbReference type="UniPathway" id="UPA00117"/>
<dbReference type="Proteomes" id="UP000008556">
    <property type="component" value="Chromosome"/>
</dbReference>
<dbReference type="GO" id="GO:0005737">
    <property type="term" value="C:cytoplasm"/>
    <property type="evidence" value="ECO:0007669"/>
    <property type="project" value="UniProtKB-SubCell"/>
</dbReference>
<dbReference type="GO" id="GO:0003995">
    <property type="term" value="F:acyl-CoA dehydrogenase activity"/>
    <property type="evidence" value="ECO:0007669"/>
    <property type="project" value="InterPro"/>
</dbReference>
<dbReference type="GO" id="GO:0050660">
    <property type="term" value="F:flavin adenine dinucleotide binding"/>
    <property type="evidence" value="ECO:0007669"/>
    <property type="project" value="InterPro"/>
</dbReference>
<dbReference type="GO" id="GO:0009437">
    <property type="term" value="P:carnitine metabolic process"/>
    <property type="evidence" value="ECO:0007669"/>
    <property type="project" value="UniProtKB-UniRule"/>
</dbReference>
<dbReference type="CDD" id="cd00567">
    <property type="entry name" value="ACAD"/>
    <property type="match status" value="1"/>
</dbReference>
<dbReference type="FunFam" id="1.20.140.10:FF:000001">
    <property type="entry name" value="Acyl-CoA dehydrogenase"/>
    <property type="match status" value="1"/>
</dbReference>
<dbReference type="FunFam" id="2.40.110.10:FF:000002">
    <property type="entry name" value="Acyl-CoA dehydrogenase fadE12"/>
    <property type="match status" value="1"/>
</dbReference>
<dbReference type="FunFam" id="1.10.540.10:FF:000005">
    <property type="entry name" value="Crotonobetainyl-CoA reductase"/>
    <property type="match status" value="1"/>
</dbReference>
<dbReference type="Gene3D" id="1.10.540.10">
    <property type="entry name" value="Acyl-CoA dehydrogenase/oxidase, N-terminal domain"/>
    <property type="match status" value="1"/>
</dbReference>
<dbReference type="Gene3D" id="2.40.110.10">
    <property type="entry name" value="Butyryl-CoA Dehydrogenase, subunit A, domain 2"/>
    <property type="match status" value="1"/>
</dbReference>
<dbReference type="Gene3D" id="1.20.140.10">
    <property type="entry name" value="Butyryl-CoA Dehydrogenase, subunit A, domain 3"/>
    <property type="match status" value="1"/>
</dbReference>
<dbReference type="HAMAP" id="MF_01052">
    <property type="entry name" value="CaiA"/>
    <property type="match status" value="1"/>
</dbReference>
<dbReference type="InterPro" id="IPR006089">
    <property type="entry name" value="Acyl-CoA_DH_CS"/>
</dbReference>
<dbReference type="InterPro" id="IPR006091">
    <property type="entry name" value="Acyl-CoA_Oxase/DH_mid-dom"/>
</dbReference>
<dbReference type="InterPro" id="IPR046373">
    <property type="entry name" value="Acyl-CoA_Oxase/DH_mid-dom_sf"/>
</dbReference>
<dbReference type="InterPro" id="IPR036250">
    <property type="entry name" value="AcylCo_DH-like_C"/>
</dbReference>
<dbReference type="InterPro" id="IPR009075">
    <property type="entry name" value="AcylCo_DH/oxidase_C"/>
</dbReference>
<dbReference type="InterPro" id="IPR013786">
    <property type="entry name" value="AcylCoA_DH/ox_N"/>
</dbReference>
<dbReference type="InterPro" id="IPR037069">
    <property type="entry name" value="AcylCoA_DH/ox_N_sf"/>
</dbReference>
<dbReference type="InterPro" id="IPR009100">
    <property type="entry name" value="AcylCoA_DH/oxidase_NM_dom_sf"/>
</dbReference>
<dbReference type="InterPro" id="IPR023450">
    <property type="entry name" value="CaiA"/>
</dbReference>
<dbReference type="NCBIfam" id="NF002885">
    <property type="entry name" value="PRK03354.1"/>
    <property type="match status" value="1"/>
</dbReference>
<dbReference type="PANTHER" id="PTHR43884">
    <property type="entry name" value="ACYL-COA DEHYDROGENASE"/>
    <property type="match status" value="1"/>
</dbReference>
<dbReference type="PANTHER" id="PTHR43884:SF12">
    <property type="entry name" value="ISOVALERYL-COA DEHYDROGENASE, MITOCHONDRIAL-RELATED"/>
    <property type="match status" value="1"/>
</dbReference>
<dbReference type="Pfam" id="PF00441">
    <property type="entry name" value="Acyl-CoA_dh_1"/>
    <property type="match status" value="1"/>
</dbReference>
<dbReference type="Pfam" id="PF02770">
    <property type="entry name" value="Acyl-CoA_dh_M"/>
    <property type="match status" value="1"/>
</dbReference>
<dbReference type="Pfam" id="PF02771">
    <property type="entry name" value="Acyl-CoA_dh_N"/>
    <property type="match status" value="1"/>
</dbReference>
<dbReference type="PIRSF" id="PIRSF016578">
    <property type="entry name" value="HsaA"/>
    <property type="match status" value="1"/>
</dbReference>
<dbReference type="SUPFAM" id="SSF47203">
    <property type="entry name" value="Acyl-CoA dehydrogenase C-terminal domain-like"/>
    <property type="match status" value="1"/>
</dbReference>
<dbReference type="SUPFAM" id="SSF56645">
    <property type="entry name" value="Acyl-CoA dehydrogenase NM domain-like"/>
    <property type="match status" value="1"/>
</dbReference>
<dbReference type="PROSITE" id="PS00072">
    <property type="entry name" value="ACYL_COA_DH_1"/>
    <property type="match status" value="1"/>
</dbReference>
<dbReference type="PROSITE" id="PS00073">
    <property type="entry name" value="ACYL_COA_DH_2"/>
    <property type="match status" value="1"/>
</dbReference>